<proteinExistence type="inferred from homology"/>
<comment type="subunit">
    <text evidence="1">Part of the 50S ribosomal subunit.</text>
</comment>
<comment type="similarity">
    <text evidence="1">Belongs to the universal ribosomal protein uL30 family.</text>
</comment>
<feature type="chain" id="PRO_0000347163" description="Large ribosomal subunit protein uL30">
    <location>
        <begin position="1"/>
        <end position="162"/>
    </location>
</feature>
<name>RL30_KORCO</name>
<sequence>MVSLEEIPLIAIVRIRGRVNVKPEIRRTLEMLHLNRKFWATLVPLTDSYKGMIHRVKDYSTYGEIDGPTLLALLRERGELKMGGSLSDEWLSSNTDFSSIEELAEALLSKRVYLHKLGWIKPYFRLHPPKGGFKRPTKRAWNDGGELGYRGKEINTLIRRMI</sequence>
<organism>
    <name type="scientific">Korarchaeum cryptofilum (strain OPF8)</name>
    <dbReference type="NCBI Taxonomy" id="374847"/>
    <lineage>
        <taxon>Archaea</taxon>
        <taxon>Thermoproteota</taxon>
        <taxon>Candidatus Korarchaeia</taxon>
        <taxon>Candidatus Korarchaeales</taxon>
        <taxon>Candidatus Korarchaeaceae</taxon>
        <taxon>Candidatus Korarchaeum</taxon>
    </lineage>
</organism>
<gene>
    <name evidence="1" type="primary">rpl30</name>
    <name type="ordered locus">Kcr_1571</name>
</gene>
<dbReference type="EMBL" id="CP000968">
    <property type="protein sequence ID" value="ACB08316.1"/>
    <property type="molecule type" value="Genomic_DNA"/>
</dbReference>
<dbReference type="SMR" id="B1L787"/>
<dbReference type="FunCoup" id="B1L787">
    <property type="interactions" value="158"/>
</dbReference>
<dbReference type="STRING" id="374847.Kcr_1571"/>
<dbReference type="EnsemblBacteria" id="ACB08316">
    <property type="protein sequence ID" value="ACB08316"/>
    <property type="gene ID" value="Kcr_1571"/>
</dbReference>
<dbReference type="KEGG" id="kcr:Kcr_1571"/>
<dbReference type="eggNOG" id="arCOG04086">
    <property type="taxonomic scope" value="Archaea"/>
</dbReference>
<dbReference type="HOGENOM" id="CLU_055156_6_0_2"/>
<dbReference type="InParanoid" id="B1L787"/>
<dbReference type="PhylomeDB" id="B1L787"/>
<dbReference type="Proteomes" id="UP000001686">
    <property type="component" value="Chromosome"/>
</dbReference>
<dbReference type="GO" id="GO:0022625">
    <property type="term" value="C:cytosolic large ribosomal subunit"/>
    <property type="evidence" value="ECO:0000318"/>
    <property type="project" value="GO_Central"/>
</dbReference>
<dbReference type="GO" id="GO:0003723">
    <property type="term" value="F:RNA binding"/>
    <property type="evidence" value="ECO:0000318"/>
    <property type="project" value="GO_Central"/>
</dbReference>
<dbReference type="GO" id="GO:0003735">
    <property type="term" value="F:structural constituent of ribosome"/>
    <property type="evidence" value="ECO:0000318"/>
    <property type="project" value="GO_Central"/>
</dbReference>
<dbReference type="GO" id="GO:0000463">
    <property type="term" value="P:maturation of LSU-rRNA from tricistronic rRNA transcript (SSU-rRNA, 5.8S rRNA, LSU-rRNA)"/>
    <property type="evidence" value="ECO:0000318"/>
    <property type="project" value="GO_Central"/>
</dbReference>
<dbReference type="GO" id="GO:0006412">
    <property type="term" value="P:translation"/>
    <property type="evidence" value="ECO:0007669"/>
    <property type="project" value="UniProtKB-UniRule"/>
</dbReference>
<dbReference type="CDD" id="cd01657">
    <property type="entry name" value="Ribosomal_L7_archeal_euk"/>
    <property type="match status" value="1"/>
</dbReference>
<dbReference type="Gene3D" id="1.10.15.30">
    <property type="match status" value="1"/>
</dbReference>
<dbReference type="Gene3D" id="3.30.1390.20">
    <property type="entry name" value="Ribosomal protein L30, ferredoxin-like fold domain"/>
    <property type="match status" value="1"/>
</dbReference>
<dbReference type="HAMAP" id="MF_01371_A">
    <property type="entry name" value="Ribosomal_uL30_A"/>
    <property type="match status" value="1"/>
</dbReference>
<dbReference type="InterPro" id="IPR036919">
    <property type="entry name" value="Ribo_uL30_ferredoxin-like_sf"/>
</dbReference>
<dbReference type="InterPro" id="IPR039699">
    <property type="entry name" value="Ribosomal_uL30"/>
</dbReference>
<dbReference type="InterPro" id="IPR005997">
    <property type="entry name" value="Ribosomal_uL30_arc"/>
</dbReference>
<dbReference type="InterPro" id="IPR035808">
    <property type="entry name" value="Ribosomal_uL30_euk_arc"/>
</dbReference>
<dbReference type="InterPro" id="IPR016082">
    <property type="entry name" value="Ribosomal_uL30_ferredoxin-like"/>
</dbReference>
<dbReference type="NCBIfam" id="NF004711">
    <property type="entry name" value="PRK06049.1"/>
    <property type="match status" value="1"/>
</dbReference>
<dbReference type="NCBIfam" id="TIGR01309">
    <property type="entry name" value="uL30_arch"/>
    <property type="match status" value="1"/>
</dbReference>
<dbReference type="PANTHER" id="PTHR11524">
    <property type="entry name" value="60S RIBOSOMAL PROTEIN L7"/>
    <property type="match status" value="1"/>
</dbReference>
<dbReference type="PANTHER" id="PTHR11524:SF16">
    <property type="entry name" value="LARGE RIBOSOMAL SUBUNIT PROTEIN UL30"/>
    <property type="match status" value="1"/>
</dbReference>
<dbReference type="Pfam" id="PF00327">
    <property type="entry name" value="Ribosomal_L30"/>
    <property type="match status" value="1"/>
</dbReference>
<dbReference type="SUPFAM" id="SSF55129">
    <property type="entry name" value="Ribosomal protein L30p/L7e"/>
    <property type="match status" value="1"/>
</dbReference>
<reference key="1">
    <citation type="journal article" date="2008" name="Proc. Natl. Acad. Sci. U.S.A.">
        <title>A korarchaeal genome reveals new insights into the evolution of the Archaea.</title>
        <authorList>
            <person name="Elkins J.G."/>
            <person name="Podar M."/>
            <person name="Graham D.E."/>
            <person name="Makarova K.S."/>
            <person name="Wolf Y."/>
            <person name="Randau L."/>
            <person name="Hedlund B.P."/>
            <person name="Brochier-Armanet C."/>
            <person name="Kunin V."/>
            <person name="Anderson I."/>
            <person name="Lapidus A."/>
            <person name="Goltsman E."/>
            <person name="Barry K."/>
            <person name="Koonin E.V."/>
            <person name="Hugenholtz P."/>
            <person name="Kyrpides N."/>
            <person name="Wanner G."/>
            <person name="Richardson P."/>
            <person name="Keller M."/>
            <person name="Stetter K.O."/>
        </authorList>
    </citation>
    <scope>NUCLEOTIDE SEQUENCE [LARGE SCALE GENOMIC DNA]</scope>
    <source>
        <strain>OPF8</strain>
    </source>
</reference>
<evidence type="ECO:0000255" key="1">
    <source>
        <dbReference type="HAMAP-Rule" id="MF_01371"/>
    </source>
</evidence>
<evidence type="ECO:0000305" key="2"/>
<protein>
    <recommendedName>
        <fullName evidence="1">Large ribosomal subunit protein uL30</fullName>
    </recommendedName>
    <alternativeName>
        <fullName evidence="2">50S ribosomal protein L30</fullName>
    </alternativeName>
</protein>
<keyword id="KW-1185">Reference proteome</keyword>
<keyword id="KW-0687">Ribonucleoprotein</keyword>
<keyword id="KW-0689">Ribosomal protein</keyword>
<accession>B1L787</accession>